<geneLocation type="chloroplast"/>
<gene>
    <name type="primary">moeB</name>
</gene>
<protein>
    <recommendedName>
        <fullName>Probable molybdopterin-synthase adenylyltransferase</fullName>
        <ecNumber>2.7.7.80</ecNumber>
    </recommendedName>
    <alternativeName>
        <fullName>MoaD protein adenylase</fullName>
    </alternativeName>
    <alternativeName>
        <fullName>Molybdopterin-converting factor subunit 1 adenylase</fullName>
    </alternativeName>
    <alternativeName>
        <fullName>Sulfur carrier protein MoaD adenylyltransferase</fullName>
    </alternativeName>
</protein>
<evidence type="ECO:0000250" key="1"/>
<evidence type="ECO:0000255" key="2">
    <source>
        <dbReference type="PROSITE-ProRule" id="PRU00173"/>
    </source>
</evidence>
<evidence type="ECO:0000305" key="3"/>
<keyword id="KW-0067">ATP-binding</keyword>
<keyword id="KW-0150">Chloroplast</keyword>
<keyword id="KW-0501">Molybdenum cofactor biosynthesis</keyword>
<keyword id="KW-0547">Nucleotide-binding</keyword>
<keyword id="KW-0548">Nucleotidyltransferase</keyword>
<keyword id="KW-0934">Plastid</keyword>
<keyword id="KW-0808">Transferase</keyword>
<feature type="chain" id="PRO_0000277344" description="Probable molybdopterin-synthase adenylyltransferase">
    <location>
        <begin position="1"/>
        <end position="378"/>
    </location>
</feature>
<feature type="domain" description="Rhodanese" evidence="2">
    <location>
        <begin position="287"/>
        <end position="376"/>
    </location>
</feature>
<feature type="binding site" evidence="1">
    <location>
        <position position="48"/>
    </location>
    <ligand>
        <name>ATP</name>
        <dbReference type="ChEBI" id="CHEBI:30616"/>
    </ligand>
</feature>
<feature type="binding site" evidence="1">
    <location>
        <position position="69"/>
    </location>
    <ligand>
        <name>ATP</name>
        <dbReference type="ChEBI" id="CHEBI:30616"/>
    </ligand>
</feature>
<feature type="binding site" evidence="1">
    <location>
        <begin position="76"/>
        <end position="80"/>
    </location>
    <ligand>
        <name>ATP</name>
        <dbReference type="ChEBI" id="CHEBI:30616"/>
    </ligand>
</feature>
<feature type="binding site" evidence="1">
    <location>
        <position position="93"/>
    </location>
    <ligand>
        <name>ATP</name>
        <dbReference type="ChEBI" id="CHEBI:30616"/>
    </ligand>
</feature>
<feature type="binding site" evidence="1">
    <location>
        <begin position="137"/>
        <end position="138"/>
    </location>
    <ligand>
        <name>ATP</name>
        <dbReference type="ChEBI" id="CHEBI:30616"/>
    </ligand>
</feature>
<sequence>MLNFKTENTKYSLEEYTRYSKHLVLPQIQLEGQERLKEAKVLFIGAGGLGSPGIIYLAAAGIGSIGIIDDDIIDLSNLQRQILYRCNDIGYSKVEIAKKKILDLNPQCIVTVFKTRLSYENSIDIIRQYDIIIDGSDNFDTRYLLNDTCLELNKIHIYGAIFQFEGQVSVFNYQGGPVYRDFYSETENKESARDTCSNSGVLGLLPGIVGTLQATEAVKIVLGYKSILSGTILTYNSLTSSFNKFKIINTKFVLSTKKHWNKYYGSKSSTFVREISVIQLQKFLISRNPQYILIDVRNHEEYHKSHLIHSLNLPLQKIKGMNYSHINLQDKICFVYCSLDSRSIFASKFLIAQKLNIVRVRGGLNAWKNIIGDLDWTL</sequence>
<name>MOEB_PYRYE</name>
<proteinExistence type="inferred from homology"/>
<comment type="function">
    <text evidence="1">Catalyzes the adenylation by ATP of the carboxyl group of the C-terminal glycine of sulfur carrier protein moaD.</text>
</comment>
<comment type="catalytic activity">
    <reaction>
        <text>[molybdopterin-synthase sulfur-carrier protein]-C-terminal Gly-Gly + ATP + H(+) = [molybdopterin-synthase sulfur-carrier protein]-C-terminal Gly-Gly-AMP + diphosphate</text>
        <dbReference type="Rhea" id="RHEA:43616"/>
        <dbReference type="Rhea" id="RHEA-COMP:12159"/>
        <dbReference type="Rhea" id="RHEA-COMP:12202"/>
        <dbReference type="ChEBI" id="CHEBI:15378"/>
        <dbReference type="ChEBI" id="CHEBI:30616"/>
        <dbReference type="ChEBI" id="CHEBI:33019"/>
        <dbReference type="ChEBI" id="CHEBI:90618"/>
        <dbReference type="ChEBI" id="CHEBI:90778"/>
        <dbReference type="EC" id="2.7.7.80"/>
    </reaction>
</comment>
<comment type="pathway">
    <text>Cofactor biosynthesis; molybdopterin biosynthesis.</text>
</comment>
<comment type="subcellular location">
    <subcellularLocation>
        <location>Plastid</location>
        <location>Chloroplast</location>
    </subcellularLocation>
</comment>
<comment type="similarity">
    <text evidence="3">Belongs to the HesA/MoeB/ThiF family.</text>
</comment>
<dbReference type="EC" id="2.7.7.80"/>
<dbReference type="EMBL" id="AP006715">
    <property type="protein sequence ID" value="BAE92460.1"/>
    <property type="molecule type" value="Genomic_DNA"/>
</dbReference>
<dbReference type="RefSeq" id="YP_537017.1">
    <property type="nucleotide sequence ID" value="NC_007932.1"/>
</dbReference>
<dbReference type="SMR" id="Q1XDF1"/>
<dbReference type="UniPathway" id="UPA00344"/>
<dbReference type="GO" id="GO:0009507">
    <property type="term" value="C:chloroplast"/>
    <property type="evidence" value="ECO:0007669"/>
    <property type="project" value="UniProtKB-SubCell"/>
</dbReference>
<dbReference type="GO" id="GO:0005829">
    <property type="term" value="C:cytosol"/>
    <property type="evidence" value="ECO:0007669"/>
    <property type="project" value="TreeGrafter"/>
</dbReference>
<dbReference type="GO" id="GO:0005524">
    <property type="term" value="F:ATP binding"/>
    <property type="evidence" value="ECO:0007669"/>
    <property type="project" value="UniProtKB-KW"/>
</dbReference>
<dbReference type="GO" id="GO:0061605">
    <property type="term" value="F:molybdopterin-synthase adenylyltransferase activity"/>
    <property type="evidence" value="ECO:0007669"/>
    <property type="project" value="UniProtKB-EC"/>
</dbReference>
<dbReference type="GO" id="GO:0008146">
    <property type="term" value="F:sulfotransferase activity"/>
    <property type="evidence" value="ECO:0007669"/>
    <property type="project" value="TreeGrafter"/>
</dbReference>
<dbReference type="GO" id="GO:0004792">
    <property type="term" value="F:thiosulfate-cyanide sulfurtransferase activity"/>
    <property type="evidence" value="ECO:0007669"/>
    <property type="project" value="TreeGrafter"/>
</dbReference>
<dbReference type="GO" id="GO:0008641">
    <property type="term" value="F:ubiquitin-like modifier activating enzyme activity"/>
    <property type="evidence" value="ECO:0007669"/>
    <property type="project" value="InterPro"/>
</dbReference>
<dbReference type="GO" id="GO:0006777">
    <property type="term" value="P:Mo-molybdopterin cofactor biosynthetic process"/>
    <property type="evidence" value="ECO:0007669"/>
    <property type="project" value="UniProtKB-KW"/>
</dbReference>
<dbReference type="CDD" id="cd00158">
    <property type="entry name" value="RHOD"/>
    <property type="match status" value="1"/>
</dbReference>
<dbReference type="CDD" id="cd00757">
    <property type="entry name" value="ThiF_MoeB_HesA_family"/>
    <property type="match status" value="1"/>
</dbReference>
<dbReference type="FunFam" id="3.40.50.720:FF:000033">
    <property type="entry name" value="Adenylyltransferase and sulfurtransferase MOCS3"/>
    <property type="match status" value="1"/>
</dbReference>
<dbReference type="Gene3D" id="3.40.50.720">
    <property type="entry name" value="NAD(P)-binding Rossmann-like Domain"/>
    <property type="match status" value="1"/>
</dbReference>
<dbReference type="Gene3D" id="3.40.250.10">
    <property type="entry name" value="Rhodanese-like domain"/>
    <property type="match status" value="1"/>
</dbReference>
<dbReference type="InterPro" id="IPR001763">
    <property type="entry name" value="Rhodanese-like_dom"/>
</dbReference>
<dbReference type="InterPro" id="IPR036873">
    <property type="entry name" value="Rhodanese-like_dom_sf"/>
</dbReference>
<dbReference type="InterPro" id="IPR045886">
    <property type="entry name" value="ThiF/MoeB/HesA"/>
</dbReference>
<dbReference type="InterPro" id="IPR000594">
    <property type="entry name" value="ThiF_NAD_FAD-bd"/>
</dbReference>
<dbReference type="InterPro" id="IPR035985">
    <property type="entry name" value="Ubiquitin-activating_enz"/>
</dbReference>
<dbReference type="PANTHER" id="PTHR10953:SF102">
    <property type="entry name" value="ADENYLYLTRANSFERASE AND SULFURTRANSFERASE MOCS3"/>
    <property type="match status" value="1"/>
</dbReference>
<dbReference type="PANTHER" id="PTHR10953">
    <property type="entry name" value="UBIQUITIN-ACTIVATING ENZYME E1"/>
    <property type="match status" value="1"/>
</dbReference>
<dbReference type="Pfam" id="PF00581">
    <property type="entry name" value="Rhodanese"/>
    <property type="match status" value="1"/>
</dbReference>
<dbReference type="Pfam" id="PF00899">
    <property type="entry name" value="ThiF"/>
    <property type="match status" value="1"/>
</dbReference>
<dbReference type="SMART" id="SM00450">
    <property type="entry name" value="RHOD"/>
    <property type="match status" value="1"/>
</dbReference>
<dbReference type="SUPFAM" id="SSF69572">
    <property type="entry name" value="Activating enzymes of the ubiquitin-like proteins"/>
    <property type="match status" value="1"/>
</dbReference>
<dbReference type="PROSITE" id="PS50206">
    <property type="entry name" value="RHODANESE_3"/>
    <property type="match status" value="1"/>
</dbReference>
<reference key="1">
    <citation type="submission" date="2003-11" db="EMBL/GenBank/DDBJ databases">
        <title>Whole genome sequence of Porphyra yezoensis chloroplast.</title>
        <authorList>
            <person name="Kunimoto M."/>
            <person name="Morishima K."/>
            <person name="Yoshikawa M."/>
            <person name="Fukuda S."/>
            <person name="Kobayashi T."/>
            <person name="Kobayashi M."/>
            <person name="Okazaki T."/>
            <person name="Ohara I."/>
            <person name="Nakayama I."/>
        </authorList>
    </citation>
    <scope>NUCLEOTIDE SEQUENCE [LARGE SCALE GENOMIC DNA]</scope>
    <source>
        <strain>U-51</strain>
    </source>
</reference>
<accession>Q1XDF1</accession>
<organism>
    <name type="scientific">Pyropia yezoensis</name>
    <name type="common">Susabi-nori</name>
    <name type="synonym">Porphyra yezoensis</name>
    <dbReference type="NCBI Taxonomy" id="2788"/>
    <lineage>
        <taxon>Eukaryota</taxon>
        <taxon>Rhodophyta</taxon>
        <taxon>Bangiophyceae</taxon>
        <taxon>Bangiales</taxon>
        <taxon>Bangiaceae</taxon>
        <taxon>Pyropia</taxon>
    </lineage>
</organism>